<reference key="1">
    <citation type="journal article" date="2004" name="Cell">
        <title>RTP family members induce functional expression of mammalian odorant receptors.</title>
        <authorList>
            <person name="Saito H."/>
            <person name="Kubota M."/>
            <person name="Roberts R.W."/>
            <person name="Chi Q."/>
            <person name="Matsunami H."/>
        </authorList>
    </citation>
    <scope>NUCLEOTIDE SEQUENCE [MRNA]</scope>
</reference>
<reference key="2">
    <citation type="journal article" date="2004" name="Genome Res.">
        <title>The status, quality, and expansion of the NIH full-length cDNA project: the Mammalian Gene Collection (MGC).</title>
        <authorList>
            <consortium name="The MGC Project Team"/>
        </authorList>
    </citation>
    <scope>NUCLEOTIDE SEQUENCE [LARGE SCALE MRNA]</scope>
    <scope>VARIANT ARG-82</scope>
    <source>
        <tissue>Salivary gland</tissue>
    </source>
</reference>
<reference key="3">
    <citation type="journal article" date="2006" name="J. Biol. Chem.">
        <title>Members of RTP and REEP gene families influence functional bitter taste receptor expression.</title>
        <authorList>
            <person name="Behrens M."/>
            <person name="Bartelt J."/>
            <person name="Reichling C."/>
            <person name="Winnig M."/>
            <person name="Kuhn C."/>
            <person name="Meyerhof W."/>
        </authorList>
    </citation>
    <scope>TISSUE SPECIFICITY</scope>
</reference>
<comment type="function">
    <text evidence="1">Specifically promotes functional cell surface expression of olfactory receptors, but not of other GPCRs.</text>
</comment>
<comment type="subunit">
    <text evidence="1">Interacts with olfactory receptors.</text>
</comment>
<comment type="interaction">
    <interactant intactId="EBI-10244780">
        <id>Q5QGT7</id>
    </interactant>
    <interactant intactId="EBI-3916106">
        <id>Q9BV23</id>
        <label>ABHD6</label>
    </interactant>
    <organismsDiffer>false</organismsDiffer>
    <experiments>3</experiments>
</comment>
<comment type="interaction">
    <interactant intactId="EBI-10244780">
        <id>Q5QGT7</id>
    </interactant>
    <interactant intactId="EBI-941819">
        <id>P16157-17</id>
        <label>ANK1</label>
    </interactant>
    <organismsDiffer>false</organismsDiffer>
    <experiments>3</experiments>
</comment>
<comment type="interaction">
    <interactant intactId="EBI-10244780">
        <id>Q5QGT7</id>
    </interactant>
    <interactant intactId="EBI-7054139">
        <id>Q68DC2</id>
        <label>ANKS6</label>
    </interactant>
    <organismsDiffer>false</organismsDiffer>
    <experiments>3</experiments>
</comment>
<comment type="interaction">
    <interactant intactId="EBI-10244780">
        <id>Q5QGT7</id>
    </interactant>
    <interactant intactId="EBI-12701138">
        <id>P41181</id>
        <label>AQP2</label>
    </interactant>
    <organismsDiffer>false</organismsDiffer>
    <experiments>3</experiments>
</comment>
<comment type="interaction">
    <interactant intactId="EBI-10244780">
        <id>Q5QGT7</id>
    </interactant>
    <interactant intactId="EBI-13059134">
        <id>Q13520</id>
        <label>AQP6</label>
    </interactant>
    <organismsDiffer>false</organismsDiffer>
    <experiments>3</experiments>
</comment>
<comment type="interaction">
    <interactant intactId="EBI-10244780">
        <id>Q5QGT7</id>
    </interactant>
    <interactant intactId="EBI-11343438">
        <id>Q3SXY8</id>
        <label>ARL13B</label>
    </interactant>
    <organismsDiffer>false</organismsDiffer>
    <experiments>3</experiments>
</comment>
<comment type="interaction">
    <interactant intactId="EBI-10244780">
        <id>Q5QGT7</id>
    </interactant>
    <interactant intactId="EBI-12222807">
        <id>P04233-2</id>
        <label>CD74</label>
    </interactant>
    <organismsDiffer>false</organismsDiffer>
    <experiments>3</experiments>
</comment>
<comment type="interaction">
    <interactant intactId="EBI-10244780">
        <id>Q5QGT7</id>
    </interactant>
    <interactant intactId="EBI-7797864">
        <id>P11912</id>
        <label>CD79A</label>
    </interactant>
    <organismsDiffer>false</organismsDiffer>
    <experiments>3</experiments>
</comment>
<comment type="interaction">
    <interactant intactId="EBI-10244780">
        <id>Q5QGT7</id>
    </interactant>
    <interactant intactId="EBI-1045797">
        <id>Q8N5K1</id>
        <label>CISD2</label>
    </interactant>
    <organismsDiffer>false</organismsDiffer>
    <experiments>3</experiments>
</comment>
<comment type="interaction">
    <interactant intactId="EBI-10244780">
        <id>Q5QGT7</id>
    </interactant>
    <interactant intactId="EBI-740744">
        <id>O95471</id>
        <label>CLDN7</label>
    </interactant>
    <organismsDiffer>false</organismsDiffer>
    <experiments>3</experiments>
</comment>
<comment type="interaction">
    <interactant intactId="EBI-10244780">
        <id>Q5QGT7</id>
    </interactant>
    <interactant intactId="EBI-18013275">
        <id>Q7Z7G2</id>
        <label>CPLX4</label>
    </interactant>
    <organismsDiffer>false</organismsDiffer>
    <experiments>3</experiments>
</comment>
<comment type="interaction">
    <interactant intactId="EBI-10244780">
        <id>Q5QGT7</id>
    </interactant>
    <interactant intactId="EBI-12823659">
        <id>Q5JRM2</id>
        <label>CXorf66</label>
    </interactant>
    <organismsDiffer>false</organismsDiffer>
    <experiments>3</experiments>
</comment>
<comment type="interaction">
    <interactant intactId="EBI-10244780">
        <id>Q5QGT7</id>
    </interactant>
    <interactant intactId="EBI-3915253">
        <id>Q15125</id>
        <label>EBP</label>
    </interactant>
    <organismsDiffer>false</organismsDiffer>
    <experiments>3</experiments>
</comment>
<comment type="interaction">
    <interactant intactId="EBI-10244780">
        <id>Q5QGT7</id>
    </interactant>
    <interactant intactId="EBI-18535450">
        <id>Q9GZR5</id>
        <label>ELOVL4</label>
    </interactant>
    <organismsDiffer>false</organismsDiffer>
    <experiments>3</experiments>
</comment>
<comment type="interaction">
    <interactant intactId="EBI-10244780">
        <id>Q5QGT7</id>
    </interactant>
    <interactant intactId="EBI-12821617">
        <id>Q9H5J4</id>
        <label>ELOVL6</label>
    </interactant>
    <organismsDiffer>false</organismsDiffer>
    <experiments>3</experiments>
</comment>
<comment type="interaction">
    <interactant intactId="EBI-10244780">
        <id>Q5QGT7</id>
    </interactant>
    <interactant intactId="EBI-10285373">
        <id>A1L3X0</id>
        <label>ELOVL7</label>
    </interactant>
    <organismsDiffer>false</organismsDiffer>
    <experiments>3</experiments>
</comment>
<comment type="interaction">
    <interactant intactId="EBI-10244780">
        <id>Q5QGT7</id>
    </interactant>
    <interactant intactId="EBI-781551">
        <id>Q9Y282</id>
        <label>ERGIC3</label>
    </interactant>
    <organismsDiffer>false</organismsDiffer>
    <experiments>3</experiments>
</comment>
<comment type="interaction">
    <interactant intactId="EBI-10244780">
        <id>Q5QGT7</id>
    </interactant>
    <interactant intactId="EBI-2870359">
        <id>P22794</id>
        <label>EVI2A</label>
    </interactant>
    <organismsDiffer>false</organismsDiffer>
    <experiments>3</experiments>
</comment>
<comment type="interaction">
    <interactant intactId="EBI-10244780">
        <id>Q5QGT7</id>
    </interactant>
    <interactant intactId="EBI-17640610">
        <id>P34910-2</id>
        <label>EVI2B</label>
    </interactant>
    <organismsDiffer>false</organismsDiffer>
    <experiments>3</experiments>
</comment>
<comment type="interaction">
    <interactant intactId="EBI-10244780">
        <id>Q5QGT7</id>
    </interactant>
    <interactant intactId="EBI-18636064">
        <id>Q8TBP5</id>
        <label>FAM174A</label>
    </interactant>
    <organismsDiffer>false</organismsDiffer>
    <experiments>3</experiments>
</comment>
<comment type="interaction">
    <interactant intactId="EBI-10244780">
        <id>Q5QGT7</id>
    </interactant>
    <interactant intactId="EBI-18304435">
        <id>Q5JX71</id>
        <label>FAM209A</label>
    </interactant>
    <organismsDiffer>false</organismsDiffer>
    <experiments>3</experiments>
</comment>
<comment type="interaction">
    <interactant intactId="EBI-10244780">
        <id>Q5QGT7</id>
    </interactant>
    <interactant intactId="EBI-18938272">
        <id>Q96KR6</id>
        <label>FAM210B</label>
    </interactant>
    <organismsDiffer>false</organismsDiffer>
    <experiments>3</experiments>
</comment>
<comment type="interaction">
    <interactant intactId="EBI-10244780">
        <id>Q5QGT7</id>
    </interactant>
    <interactant intactId="EBI-743099">
        <id>Q969F0</id>
        <label>FATE1</label>
    </interactant>
    <organismsDiffer>false</organismsDiffer>
    <experiments>3</experiments>
</comment>
<comment type="interaction">
    <interactant intactId="EBI-10244780">
        <id>Q5QGT7</id>
    </interactant>
    <interactant intactId="EBI-2833872">
        <id>O15552</id>
        <label>FFAR2</label>
    </interactant>
    <organismsDiffer>false</organismsDiffer>
    <experiments>3</experiments>
</comment>
<comment type="interaction">
    <interactant intactId="EBI-10244780">
        <id>Q5QGT7</id>
    </interactant>
    <interactant intactId="EBI-18908258">
        <id>O00258</id>
        <label>GET1</label>
    </interactant>
    <organismsDiffer>false</organismsDiffer>
    <experiments>3</experiments>
</comment>
<comment type="interaction">
    <interactant intactId="EBI-10244780">
        <id>Q5QGT7</id>
    </interactant>
    <interactant intactId="EBI-17565645">
        <id>P08034</id>
        <label>GJB1</label>
    </interactant>
    <organismsDiffer>false</organismsDiffer>
    <experiments>3</experiments>
</comment>
<comment type="interaction">
    <interactant intactId="EBI-10244780">
        <id>Q5QGT7</id>
    </interactant>
    <interactant intactId="EBI-3909454">
        <id>O95377</id>
        <label>GJB5</label>
    </interactant>
    <organismsDiffer>false</organismsDiffer>
    <experiments>3</experiments>
</comment>
<comment type="interaction">
    <interactant intactId="EBI-10244780">
        <id>Q5QGT7</id>
    </interactant>
    <interactant intactId="EBI-17935713">
        <id>Q96P66</id>
        <label>GPR101</label>
    </interactant>
    <organismsDiffer>false</organismsDiffer>
    <experiments>3</experiments>
</comment>
<comment type="interaction">
    <interactant intactId="EBI-10244780">
        <id>Q5QGT7</id>
    </interactant>
    <interactant intactId="EBI-13345167">
        <id>Q8TDT2</id>
        <label>GPR152</label>
    </interactant>
    <organismsDiffer>false</organismsDiffer>
    <experiments>3</experiments>
</comment>
<comment type="interaction">
    <interactant intactId="EBI-10244780">
        <id>Q5QGT7</id>
    </interactant>
    <interactant intactId="EBI-18076404">
        <id>O15529</id>
        <label>GPR42</label>
    </interactant>
    <organismsDiffer>false</organismsDiffer>
    <experiments>3</experiments>
</comment>
<comment type="interaction">
    <interactant intactId="EBI-10244780">
        <id>Q5QGT7</id>
    </interactant>
    <interactant intactId="EBI-11721746">
        <id>Q8TED1</id>
        <label>GPX8</label>
    </interactant>
    <organismsDiffer>false</organismsDiffer>
    <experiments>3</experiments>
</comment>
<comment type="interaction">
    <interactant intactId="EBI-10244780">
        <id>Q5QGT7</id>
    </interactant>
    <interactant intactId="EBI-11427100">
        <id>P31937</id>
        <label>HIBADH</label>
    </interactant>
    <organismsDiffer>false</organismsDiffer>
    <experiments>3</experiments>
</comment>
<comment type="interaction">
    <interactant intactId="EBI-10244780">
        <id>Q5QGT7</id>
    </interactant>
    <interactant intactId="EBI-1052304">
        <id>Q8NBQ5</id>
        <label>HSD17B11</label>
    </interactant>
    <organismsDiffer>false</organismsDiffer>
    <experiments>3</experiments>
</comment>
<comment type="interaction">
    <interactant intactId="EBI-10244780">
        <id>Q5QGT7</id>
    </interactant>
    <interactant intactId="EBI-3905457">
        <id>P38484</id>
        <label>IFNGR2</label>
    </interactant>
    <organismsDiffer>false</organismsDiffer>
    <experiments>3</experiments>
</comment>
<comment type="interaction">
    <interactant intactId="EBI-10244780">
        <id>Q5QGT7</id>
    </interactant>
    <interactant intactId="EBI-10266796">
        <id>Q8N5M9</id>
        <label>JAGN1</label>
    </interactant>
    <organismsDiffer>false</organismsDiffer>
    <experiments>3</experiments>
</comment>
<comment type="interaction">
    <interactant intactId="EBI-10244780">
        <id>Q5QGT7</id>
    </interactant>
    <interactant intactId="EBI-749265">
        <id>Q8N6L0</id>
        <label>KASH5</label>
    </interactant>
    <organismsDiffer>false</organismsDiffer>
    <experiments>3</experiments>
</comment>
<comment type="interaction">
    <interactant intactId="EBI-10244780">
        <id>Q5QGT7</id>
    </interactant>
    <interactant intactId="EBI-12017638">
        <id>P48051</id>
        <label>KCNJ6</label>
    </interactant>
    <organismsDiffer>false</organismsDiffer>
    <experiments>3</experiments>
</comment>
<comment type="interaction">
    <interactant intactId="EBI-10244780">
        <id>Q5QGT7</id>
    </interactant>
    <interactant intactId="EBI-8632435">
        <id>P43628</id>
        <label>KIR2DL3</label>
    </interactant>
    <organismsDiffer>false</organismsDiffer>
    <experiments>3</experiments>
</comment>
<comment type="interaction">
    <interactant intactId="EBI-10244780">
        <id>Q5QGT7</id>
    </interactant>
    <interactant intactId="EBI-17719490">
        <id>Q16363-3</id>
        <label>LAMA4</label>
    </interactant>
    <organismsDiffer>false</organismsDiffer>
    <experiments>3</experiments>
</comment>
<comment type="interaction">
    <interactant intactId="EBI-10244780">
        <id>Q5QGT7</id>
    </interactant>
    <interactant intactId="EBI-2865663">
        <id>Q13571</id>
        <label>LAPTM5</label>
    </interactant>
    <organismsDiffer>false</organismsDiffer>
    <experiments>3</experiments>
</comment>
<comment type="interaction">
    <interactant intactId="EBI-10244780">
        <id>Q5QGT7</id>
    </interactant>
    <interactant intactId="EBI-750776">
        <id>O95214</id>
        <label>LEPROTL1</label>
    </interactant>
    <organismsDiffer>false</organismsDiffer>
    <experiments>3</experiments>
</comment>
<comment type="interaction">
    <interactant intactId="EBI-10244780">
        <id>Q5QGT7</id>
    </interactant>
    <interactant intactId="EBI-2830566">
        <id>Q9H400</id>
        <label>LIME1</label>
    </interactant>
    <organismsDiffer>false</organismsDiffer>
    <experiments>3</experiments>
</comment>
<comment type="interaction">
    <interactant intactId="EBI-10244780">
        <id>Q5QGT7</id>
    </interactant>
    <interactant intactId="EBI-3920969">
        <id>Q6N075</id>
        <label>MFSD5</label>
    </interactant>
    <organismsDiffer>false</organismsDiffer>
    <experiments>3</experiments>
</comment>
<comment type="interaction">
    <interactant intactId="EBI-10244780">
        <id>Q5QGT7</id>
    </interactant>
    <interactant intactId="EBI-721471">
        <id>O95182</id>
        <label>NDUFA7</label>
    </interactant>
    <organismsDiffer>false</organismsDiffer>
    <experiments>3</experiments>
</comment>
<comment type="interaction">
    <interactant intactId="EBI-10244780">
        <id>Q5QGT7</id>
    </interactant>
    <interactant intactId="EBI-10969203">
        <id>O14524-2</id>
        <label>NEMP1</label>
    </interactant>
    <organismsDiffer>false</organismsDiffer>
    <experiments>3</experiments>
</comment>
<comment type="interaction">
    <interactant intactId="EBI-10244780">
        <id>Q5QGT7</id>
    </interactant>
    <interactant intactId="EBI-716063">
        <id>Q13113</id>
        <label>PDZK1IP1</label>
    </interactant>
    <organismsDiffer>false</organismsDiffer>
    <experiments>3</experiments>
</comment>
<comment type="interaction">
    <interactant intactId="EBI-10244780">
        <id>Q5QGT7</id>
    </interactant>
    <interactant intactId="EBI-7545592">
        <id>Q9H6H4</id>
        <label>REEP4</label>
    </interactant>
    <organismsDiffer>false</organismsDiffer>
    <experiments>3</experiments>
</comment>
<comment type="interaction">
    <interactant intactId="EBI-10244780">
        <id>Q5QGT7</id>
    </interactant>
    <interactant intactId="EBI-10269209">
        <id>Q8NC24</id>
        <label>RELL2</label>
    </interactant>
    <organismsDiffer>false</organismsDiffer>
    <experiments>3</experiments>
</comment>
<comment type="interaction">
    <interactant intactId="EBI-10244780">
        <id>Q5QGT7</id>
    </interactant>
    <interactant intactId="EBI-18397230">
        <id>Q6P5S7</id>
        <label>RNASEK</label>
    </interactant>
    <organismsDiffer>false</organismsDiffer>
    <experiments>3</experiments>
</comment>
<comment type="interaction">
    <interactant intactId="EBI-10244780">
        <id>Q5QGT7</id>
    </interactant>
    <interactant intactId="EBI-2855401">
        <id>Q9BY50</id>
        <label>SEC11C</label>
    </interactant>
    <organismsDiffer>false</organismsDiffer>
    <experiments>3</experiments>
</comment>
<comment type="interaction">
    <interactant intactId="EBI-10244780">
        <id>Q5QGT7</id>
    </interactant>
    <interactant intactId="EBI-1046170">
        <id>O95470</id>
        <label>SGPL1</label>
    </interactant>
    <organismsDiffer>false</organismsDiffer>
    <experiments>3</experiments>
</comment>
<comment type="interaction">
    <interactant intactId="EBI-10244780">
        <id>Q5QGT7</id>
    </interactant>
    <interactant intactId="EBI-18159983">
        <id>Q3KNW5</id>
        <label>SLC10A6</label>
    </interactant>
    <organismsDiffer>false</organismsDiffer>
    <experiments>3</experiments>
</comment>
<comment type="interaction">
    <interactant intactId="EBI-10244780">
        <id>Q5QGT7</id>
    </interactant>
    <interactant intactId="EBI-19141793">
        <id>Q13336-2</id>
        <label>SLC14A1</label>
    </interactant>
    <organismsDiffer>false</organismsDiffer>
    <experiments>3</experiments>
</comment>
<comment type="interaction">
    <interactant intactId="EBI-10244780">
        <id>Q5QGT7</id>
    </interactant>
    <interactant intactId="EBI-12811757">
        <id>O95436-2</id>
        <label>SLC34A2</label>
    </interactant>
    <organismsDiffer>false</organismsDiffer>
    <experiments>3</experiments>
</comment>
<comment type="interaction">
    <interactant intactId="EBI-10244780">
        <id>Q5QGT7</id>
    </interactant>
    <interactant intactId="EBI-2823239">
        <id>Q9NUM3</id>
        <label>SLC39A9</label>
    </interactant>
    <organismsDiffer>false</organismsDiffer>
    <experiments>3</experiments>
</comment>
<comment type="interaction">
    <interactant intactId="EBI-10244780">
        <id>Q5QGT7</id>
    </interactant>
    <interactant intactId="EBI-17280858">
        <id>Q8WWF3</id>
        <label>SSMEM1</label>
    </interactant>
    <organismsDiffer>false</organismsDiffer>
    <experiments>3</experiments>
</comment>
<comment type="interaction">
    <interactant intactId="EBI-10244780">
        <id>Q5QGT7</id>
    </interactant>
    <interactant intactId="EBI-1211440">
        <id>P27105</id>
        <label>STOM</label>
    </interactant>
    <organismsDiffer>false</organismsDiffer>
    <experiments>3</experiments>
</comment>
<comment type="interaction">
    <interactant intactId="EBI-10244780">
        <id>Q5QGT7</id>
    </interactant>
    <interactant intactId="EBI-712466">
        <id>Q16623</id>
        <label>STX1A</label>
    </interactant>
    <organismsDiffer>false</organismsDiffer>
    <experiments>3</experiments>
</comment>
<comment type="interaction">
    <interactant intactId="EBI-10244780">
        <id>Q5QGT7</id>
    </interactant>
    <interactant intactId="EBI-11956649">
        <id>P32856-2</id>
        <label>STX2</label>
    </interactant>
    <organismsDiffer>false</organismsDiffer>
    <experiments>3</experiments>
</comment>
<comment type="interaction">
    <interactant intactId="EBI-10244780">
        <id>Q5QGT7</id>
    </interactant>
    <interactant intactId="EBI-17933167">
        <id>Q9NYW4</id>
        <label>TAS2R5</label>
    </interactant>
    <organismsDiffer>false</organismsDiffer>
    <experiments>3</experiments>
</comment>
<comment type="interaction">
    <interactant intactId="EBI-10244780">
        <id>Q5QGT7</id>
    </interactant>
    <interactant intactId="EBI-726691">
        <id>Q8WY91</id>
        <label>THAP4</label>
    </interactant>
    <organismsDiffer>false</organismsDiffer>
    <experiments>3</experiments>
</comment>
<comment type="interaction">
    <interactant intactId="EBI-10244780">
        <id>Q5QGT7</id>
    </interactant>
    <interactant intactId="EBI-17555467">
        <id>Q0VDI3</id>
        <label>TMEM267</label>
    </interactant>
    <organismsDiffer>false</organismsDiffer>
    <experiments>3</experiments>
</comment>
<comment type="interaction">
    <interactant intactId="EBI-10244780">
        <id>Q5QGT7</id>
    </interactant>
    <interactant intactId="EBI-11722971">
        <id>Q53FP2</id>
        <label>TMEM35A</label>
    </interactant>
    <organismsDiffer>false</organismsDiffer>
    <experiments>3</experiments>
</comment>
<comment type="interaction">
    <interactant intactId="EBI-10244780">
        <id>Q5QGT7</id>
    </interactant>
    <interactant intactId="EBI-726044">
        <id>Q9NW97</id>
        <label>TMEM51</label>
    </interactant>
    <organismsDiffer>false</organismsDiffer>
    <experiments>3</experiments>
</comment>
<comment type="interaction">
    <interactant intactId="EBI-10244780">
        <id>Q5QGT7</id>
    </interactant>
    <interactant intactId="EBI-18178701">
        <id>Q4KMG9</id>
        <label>TMEM52B</label>
    </interactant>
    <organismsDiffer>false</organismsDiffer>
    <experiments>3</experiments>
</comment>
<comment type="interaction">
    <interactant intactId="EBI-10244780">
        <id>Q5QGT7</id>
    </interactant>
    <interactant intactId="EBI-2548832">
        <id>Q8N661</id>
        <label>TMEM86B</label>
    </interactant>
    <organismsDiffer>false</organismsDiffer>
    <experiments>3</experiments>
</comment>
<comment type="interaction">
    <interactant intactId="EBI-10244780">
        <id>Q5QGT7</id>
    </interactant>
    <interactant intactId="EBI-10975829">
        <id>Q6UXU6</id>
        <label>TMEM92</label>
    </interactant>
    <organismsDiffer>false</organismsDiffer>
    <experiments>3</experiments>
</comment>
<comment type="interaction">
    <interactant intactId="EBI-10244780">
        <id>Q5QGT7</id>
    </interactant>
    <interactant intactId="EBI-11724433">
        <id>Q6ZT21</id>
        <label>TMPPE</label>
    </interactant>
    <organismsDiffer>false</organismsDiffer>
    <experiments>3</experiments>
</comment>
<comment type="interaction">
    <interactant intactId="EBI-10244780">
        <id>Q5QGT7</id>
    </interactant>
    <interactant intactId="EBI-6447886">
        <id>Q9Y320</id>
        <label>TMX2</label>
    </interactant>
    <organismsDiffer>false</organismsDiffer>
    <experiments>3</experiments>
</comment>
<comment type="interaction">
    <interactant intactId="EBI-10244780">
        <id>Q5QGT7</id>
    </interactant>
    <interactant intactId="EBI-350510">
        <id>Q9BZF9</id>
        <label>UACA</label>
    </interactant>
    <organismsDiffer>false</organismsDiffer>
    <experiments>3</experiments>
</comment>
<comment type="interaction">
    <interactant intactId="EBI-10244780">
        <id>Q5QGT7</id>
    </interactant>
    <interactant intactId="EBI-1055364">
        <id>Q3ZAQ7</id>
        <label>VMA21</label>
    </interactant>
    <organismsDiffer>false</organismsDiffer>
    <experiments>3</experiments>
</comment>
<comment type="subcellular location">
    <subcellularLocation>
        <location evidence="1">Cell membrane</location>
        <topology evidence="1">Single-pass type III membrane protein</topology>
    </subcellularLocation>
    <text evidence="1">Effective cell surface expression depends upon interaction with olfactory receptors.</text>
</comment>
<comment type="tissue specificity">
    <text evidence="4">Expressed in circumvallate papillae and testis.</text>
</comment>
<comment type="similarity">
    <text evidence="5">Belongs to the TMEM7 family.</text>
</comment>
<gene>
    <name type="primary">RTP2</name>
    <name type="synonym">Z3CXXC2</name>
</gene>
<protein>
    <recommendedName>
        <fullName>Receptor-transporting protein 2</fullName>
    </recommendedName>
    <alternativeName>
        <fullName>3CxxC-type zinc finger protein 2</fullName>
    </alternativeName>
</protein>
<organism>
    <name type="scientific">Homo sapiens</name>
    <name type="common">Human</name>
    <dbReference type="NCBI Taxonomy" id="9606"/>
    <lineage>
        <taxon>Eukaryota</taxon>
        <taxon>Metazoa</taxon>
        <taxon>Chordata</taxon>
        <taxon>Craniata</taxon>
        <taxon>Vertebrata</taxon>
        <taxon>Euteleostomi</taxon>
        <taxon>Mammalia</taxon>
        <taxon>Eutheria</taxon>
        <taxon>Euarchontoglires</taxon>
        <taxon>Primates</taxon>
        <taxon>Haplorrhini</taxon>
        <taxon>Catarrhini</taxon>
        <taxon>Hominidae</taxon>
        <taxon>Homo</taxon>
    </lineage>
</organism>
<accession>Q5QGT7</accession>
<accession>Q6NVH4</accession>
<name>RTP2_HUMAN</name>
<feature type="chain" id="PRO_0000181991" description="Receptor-transporting protein 2">
    <location>
        <begin position="1"/>
        <end position="225"/>
    </location>
</feature>
<feature type="topological domain" description="Cytoplasmic" evidence="2">
    <location>
        <begin position="1"/>
        <end position="196"/>
    </location>
</feature>
<feature type="transmembrane region" description="Helical" evidence="2">
    <location>
        <begin position="197"/>
        <end position="219"/>
    </location>
</feature>
<feature type="topological domain" description="Extracellular" evidence="2">
    <location>
        <begin position="220"/>
        <end position="225"/>
    </location>
</feature>
<feature type="zinc finger region" description="3CxxC-type" evidence="2">
    <location>
        <begin position="52"/>
        <end position="161"/>
    </location>
</feature>
<feature type="sequence variant" id="VAR_021488" description="In dbSNP:rs11707167." evidence="3">
    <original>Q</original>
    <variation>R</variation>
    <location>
        <position position="82"/>
    </location>
</feature>
<evidence type="ECO:0000250" key="1"/>
<evidence type="ECO:0000255" key="2"/>
<evidence type="ECO:0000269" key="3">
    <source>
    </source>
</evidence>
<evidence type="ECO:0000269" key="4">
    <source>
    </source>
</evidence>
<evidence type="ECO:0000305" key="5"/>
<dbReference type="EMBL" id="AY562236">
    <property type="protein sequence ID" value="AAT70681.1"/>
    <property type="molecule type" value="mRNA"/>
</dbReference>
<dbReference type="EMBL" id="BC068081">
    <property type="protein sequence ID" value="AAH68081.1"/>
    <property type="molecule type" value="mRNA"/>
</dbReference>
<dbReference type="CCDS" id="CCDS33911.1"/>
<dbReference type="RefSeq" id="NP_001004312.2">
    <property type="nucleotide sequence ID" value="NM_001004312.2"/>
</dbReference>
<dbReference type="RefSeq" id="XP_016861790.1">
    <property type="nucleotide sequence ID" value="XM_017006301.2"/>
</dbReference>
<dbReference type="RefSeq" id="XP_016861791.1">
    <property type="nucleotide sequence ID" value="XM_017006302.2"/>
</dbReference>
<dbReference type="SMR" id="Q5QGT7"/>
<dbReference type="BioGRID" id="131331">
    <property type="interactions" value="89"/>
</dbReference>
<dbReference type="FunCoup" id="Q5QGT7">
    <property type="interactions" value="33"/>
</dbReference>
<dbReference type="IntAct" id="Q5QGT7">
    <property type="interactions" value="83"/>
</dbReference>
<dbReference type="STRING" id="9606.ENSP00000350976"/>
<dbReference type="iPTMnet" id="Q5QGT7"/>
<dbReference type="PhosphoSitePlus" id="Q5QGT7"/>
<dbReference type="BioMuta" id="RTP2"/>
<dbReference type="DMDM" id="61216423"/>
<dbReference type="MassIVE" id="Q5QGT7"/>
<dbReference type="PaxDb" id="9606-ENSP00000350976"/>
<dbReference type="PeptideAtlas" id="Q5QGT7"/>
<dbReference type="Antibodypedia" id="19329">
    <property type="antibodies" value="84 antibodies from 16 providers"/>
</dbReference>
<dbReference type="DNASU" id="344892"/>
<dbReference type="Ensembl" id="ENST00000358241.1">
    <property type="protein sequence ID" value="ENSP00000350976.1"/>
    <property type="gene ID" value="ENSG00000198471.1"/>
</dbReference>
<dbReference type="GeneID" id="344892"/>
<dbReference type="KEGG" id="hsa:344892"/>
<dbReference type="MANE-Select" id="ENST00000358241.1">
    <property type="protein sequence ID" value="ENSP00000350976.1"/>
    <property type="RefSeq nucleotide sequence ID" value="NM_001004312.2"/>
    <property type="RefSeq protein sequence ID" value="NP_001004312.2"/>
</dbReference>
<dbReference type="UCSC" id="uc003fro.1">
    <property type="organism name" value="human"/>
</dbReference>
<dbReference type="AGR" id="HGNC:32486"/>
<dbReference type="CTD" id="344892"/>
<dbReference type="DisGeNET" id="344892"/>
<dbReference type="GeneCards" id="RTP2"/>
<dbReference type="HGNC" id="HGNC:32486">
    <property type="gene designation" value="RTP2"/>
</dbReference>
<dbReference type="HPA" id="ENSG00000198471">
    <property type="expression patterns" value="Group enriched (skeletal muscle, testis)"/>
</dbReference>
<dbReference type="MIM" id="609138">
    <property type="type" value="gene"/>
</dbReference>
<dbReference type="neXtProt" id="NX_Q5QGT7"/>
<dbReference type="OpenTargets" id="ENSG00000198471"/>
<dbReference type="PharmGKB" id="PA143485605"/>
<dbReference type="VEuPathDB" id="HostDB:ENSG00000198471"/>
<dbReference type="eggNOG" id="ENOG502S1UZ">
    <property type="taxonomic scope" value="Eukaryota"/>
</dbReference>
<dbReference type="GeneTree" id="ENSGT00940000162172"/>
<dbReference type="HOGENOM" id="CLU_092465_0_0_1"/>
<dbReference type="InParanoid" id="Q5QGT7"/>
<dbReference type="OMA" id="DSWELIM"/>
<dbReference type="OrthoDB" id="9548379at2759"/>
<dbReference type="PAN-GO" id="Q5QGT7">
    <property type="GO annotations" value="5 GO annotations based on evolutionary models"/>
</dbReference>
<dbReference type="PhylomeDB" id="Q5QGT7"/>
<dbReference type="TreeFam" id="TF333246"/>
<dbReference type="PathwayCommons" id="Q5QGT7"/>
<dbReference type="Reactome" id="R-HSA-9752946">
    <property type="pathway name" value="Expression and translocation of olfactory receptors"/>
</dbReference>
<dbReference type="SignaLink" id="Q5QGT7"/>
<dbReference type="BioGRID-ORCS" id="344892">
    <property type="hits" value="9 hits in 1137 CRISPR screens"/>
</dbReference>
<dbReference type="GenomeRNAi" id="344892"/>
<dbReference type="Pharos" id="Q5QGT7">
    <property type="development level" value="Tbio"/>
</dbReference>
<dbReference type="PRO" id="PR:Q5QGT7"/>
<dbReference type="Proteomes" id="UP000005640">
    <property type="component" value="Chromosome 3"/>
</dbReference>
<dbReference type="RNAct" id="Q5QGT7">
    <property type="molecule type" value="protein"/>
</dbReference>
<dbReference type="Bgee" id="ENSG00000198471">
    <property type="expression patterns" value="Expressed in primordial germ cell in gonad and 6 other cell types or tissues"/>
</dbReference>
<dbReference type="GO" id="GO:0009986">
    <property type="term" value="C:cell surface"/>
    <property type="evidence" value="ECO:0000314"/>
    <property type="project" value="HGNC-UCL"/>
</dbReference>
<dbReference type="GO" id="GO:0005886">
    <property type="term" value="C:plasma membrane"/>
    <property type="evidence" value="ECO:0007669"/>
    <property type="project" value="UniProtKB-SubCell"/>
</dbReference>
<dbReference type="GO" id="GO:0031849">
    <property type="term" value="F:olfactory receptor binding"/>
    <property type="evidence" value="ECO:0000315"/>
    <property type="project" value="HGNC-UCL"/>
</dbReference>
<dbReference type="GO" id="GO:0008270">
    <property type="term" value="F:zinc ion binding"/>
    <property type="evidence" value="ECO:0007669"/>
    <property type="project" value="UniProtKB-KW"/>
</dbReference>
<dbReference type="GO" id="GO:0001580">
    <property type="term" value="P:detection of chemical stimulus involved in sensory perception of bitter taste"/>
    <property type="evidence" value="ECO:0000318"/>
    <property type="project" value="GO_Central"/>
</dbReference>
<dbReference type="GO" id="GO:0051205">
    <property type="term" value="P:protein insertion into membrane"/>
    <property type="evidence" value="ECO:0000314"/>
    <property type="project" value="HGNC-UCL"/>
</dbReference>
<dbReference type="GO" id="GO:0006612">
    <property type="term" value="P:protein targeting to membrane"/>
    <property type="evidence" value="ECO:0000318"/>
    <property type="project" value="GO_Central"/>
</dbReference>
<dbReference type="InterPro" id="IPR026096">
    <property type="entry name" value="R-trans_p"/>
</dbReference>
<dbReference type="InterPro" id="IPR027377">
    <property type="entry name" value="ZAR1/RTP1-5-like_Znf-3CxxC"/>
</dbReference>
<dbReference type="PANTHER" id="PTHR14402">
    <property type="entry name" value="RECEPTOR TRANSPORTING PROTEIN"/>
    <property type="match status" value="1"/>
</dbReference>
<dbReference type="PANTHER" id="PTHR14402:SF18">
    <property type="entry name" value="RECEPTOR-TRANSPORTING PROTEIN 2"/>
    <property type="match status" value="1"/>
</dbReference>
<dbReference type="Pfam" id="PF13695">
    <property type="entry name" value="Zn_ribbon_3CxxC"/>
    <property type="match status" value="1"/>
</dbReference>
<dbReference type="SMART" id="SM01328">
    <property type="entry name" value="zf-3CxxC"/>
    <property type="match status" value="1"/>
</dbReference>
<sequence>MCTSLTTCEWKKVFYEKMEVAKPADSWELIIDPNLKPSELAPGWKQYLEQHASGRFHCSWCWHTWQSAHVVILFHMFLDRAQRAGSVRMRVFKQLCYECGTARLDESSMLEENIEGLVDNLITSLREQCYEEDGGQYRIHVASRPDSGPHRAEFCEACQEGIVHWKPSEKLLEEEVTTYTSEASKPRAQAGSGYNFLSLRWCLFWASLCLLVVYLQFSFLSPAFF</sequence>
<proteinExistence type="evidence at protein level"/>
<keyword id="KW-1003">Cell membrane</keyword>
<keyword id="KW-0472">Membrane</keyword>
<keyword id="KW-0479">Metal-binding</keyword>
<keyword id="KW-1185">Reference proteome</keyword>
<keyword id="KW-0812">Transmembrane</keyword>
<keyword id="KW-1133">Transmembrane helix</keyword>
<keyword id="KW-0862">Zinc</keyword>
<keyword id="KW-0863">Zinc-finger</keyword>